<reference key="1">
    <citation type="journal article" date="2009" name="Nature">
        <title>The Sorghum bicolor genome and the diversification of grasses.</title>
        <authorList>
            <person name="Paterson A.H."/>
            <person name="Bowers J.E."/>
            <person name="Bruggmann R."/>
            <person name="Dubchak I."/>
            <person name="Grimwood J."/>
            <person name="Gundlach H."/>
            <person name="Haberer G."/>
            <person name="Hellsten U."/>
            <person name="Mitros T."/>
            <person name="Poliakov A."/>
            <person name="Schmutz J."/>
            <person name="Spannagl M."/>
            <person name="Tang H."/>
            <person name="Wang X."/>
            <person name="Wicker T."/>
            <person name="Bharti A.K."/>
            <person name="Chapman J."/>
            <person name="Feltus F.A."/>
            <person name="Gowik U."/>
            <person name="Grigoriev I.V."/>
            <person name="Lyons E."/>
            <person name="Maher C.A."/>
            <person name="Martis M."/>
            <person name="Narechania A."/>
            <person name="Otillar R.P."/>
            <person name="Penning B.W."/>
            <person name="Salamov A.A."/>
            <person name="Wang Y."/>
            <person name="Zhang L."/>
            <person name="Carpita N.C."/>
            <person name="Freeling M."/>
            <person name="Gingle A.R."/>
            <person name="Hash C.T."/>
            <person name="Keller B."/>
            <person name="Klein P."/>
            <person name="Kresovich S."/>
            <person name="McCann M.C."/>
            <person name="Ming R."/>
            <person name="Peterson D.G."/>
            <person name="Mehboob-ur-Rahman M."/>
            <person name="Ware D."/>
            <person name="Westhoff P."/>
            <person name="Mayer K.F.X."/>
            <person name="Messing J."/>
            <person name="Rokhsar D.S."/>
        </authorList>
    </citation>
    <scope>NUCLEOTIDE SEQUENCE [LARGE SCALE GENOMIC DNA]</scope>
    <source>
        <strain>cv. BTx623</strain>
    </source>
</reference>
<reference key="2">
    <citation type="journal article" date="2018" name="Plant J.">
        <title>The Sorghum bicolor reference genome: improved assembly, gene annotations, a transcriptome atlas, and signatures of genome organization.</title>
        <authorList>
            <person name="McCormick R.F."/>
            <person name="Truong S.K."/>
            <person name="Sreedasyam A."/>
            <person name="Jenkins J."/>
            <person name="Shu S."/>
            <person name="Sims D."/>
            <person name="Kennedy M."/>
            <person name="Amirebrahimi M."/>
            <person name="Weers B.D."/>
            <person name="McKinley B."/>
            <person name="Mattison A."/>
            <person name="Morishige D.T."/>
            <person name="Grimwood J."/>
            <person name="Schmutz J."/>
            <person name="Mullet J.E."/>
        </authorList>
    </citation>
    <scope>GENOME REANNOTATION</scope>
    <source>
        <strain>cv. BTx623</strain>
    </source>
</reference>
<name>NNRD_SORBI</name>
<organism>
    <name type="scientific">Sorghum bicolor</name>
    <name type="common">Sorghum</name>
    <name type="synonym">Sorghum vulgare</name>
    <dbReference type="NCBI Taxonomy" id="4558"/>
    <lineage>
        <taxon>Eukaryota</taxon>
        <taxon>Viridiplantae</taxon>
        <taxon>Streptophyta</taxon>
        <taxon>Embryophyta</taxon>
        <taxon>Tracheophyta</taxon>
        <taxon>Spermatophyta</taxon>
        <taxon>Magnoliopsida</taxon>
        <taxon>Liliopsida</taxon>
        <taxon>Poales</taxon>
        <taxon>Poaceae</taxon>
        <taxon>PACMAD clade</taxon>
        <taxon>Panicoideae</taxon>
        <taxon>Andropogonodae</taxon>
        <taxon>Andropogoneae</taxon>
        <taxon>Sorghinae</taxon>
        <taxon>Sorghum</taxon>
    </lineage>
</organism>
<evidence type="ECO:0000255" key="1">
    <source>
        <dbReference type="HAMAP-Rule" id="MF_03157"/>
    </source>
</evidence>
<gene>
    <name type="ordered locus">Sb05g010020</name>
</gene>
<protein>
    <recommendedName>
        <fullName evidence="1">ATP-dependent (S)-NAD(P)H-hydrate dehydratase</fullName>
        <ecNumber evidence="1">4.2.1.93</ecNumber>
    </recommendedName>
    <alternativeName>
        <fullName evidence="1">ATP-dependent NAD(P)HX dehydratase</fullName>
    </alternativeName>
</protein>
<keyword id="KW-0067">ATP-binding</keyword>
<keyword id="KW-0456">Lyase</keyword>
<keyword id="KW-0520">NAD</keyword>
<keyword id="KW-0521">NADP</keyword>
<keyword id="KW-0547">Nucleotide-binding</keyword>
<keyword id="KW-0597">Phosphoprotein</keyword>
<keyword id="KW-1185">Reference proteome</keyword>
<accession>C5Y210</accession>
<comment type="function">
    <text evidence="1">Catalyzes the dehydration of the S-form of NAD(P)HX at the expense of ATP, which is converted to ADP. Together with NAD(P)HX epimerase, which catalyzes the epimerization of the S- and R-forms, the enzyme allows the repair of both epimers of NAD(P)HX, a damaged form of NAD(P)H that is a result of enzymatic or heat-dependent hydration.</text>
</comment>
<comment type="catalytic activity">
    <reaction evidence="1">
        <text>(6S)-NADHX + ATP = ADP + phosphate + NADH + H(+)</text>
        <dbReference type="Rhea" id="RHEA:19017"/>
        <dbReference type="ChEBI" id="CHEBI:15378"/>
        <dbReference type="ChEBI" id="CHEBI:30616"/>
        <dbReference type="ChEBI" id="CHEBI:43474"/>
        <dbReference type="ChEBI" id="CHEBI:57945"/>
        <dbReference type="ChEBI" id="CHEBI:64074"/>
        <dbReference type="ChEBI" id="CHEBI:456216"/>
        <dbReference type="EC" id="4.2.1.93"/>
    </reaction>
</comment>
<comment type="catalytic activity">
    <reaction>
        <text>(6S)-NADPHX + ATP = ADP + phosphate + NADPH + H(+)</text>
        <dbReference type="Rhea" id="RHEA:32231"/>
        <dbReference type="ChEBI" id="CHEBI:15378"/>
        <dbReference type="ChEBI" id="CHEBI:30616"/>
        <dbReference type="ChEBI" id="CHEBI:43474"/>
        <dbReference type="ChEBI" id="CHEBI:57783"/>
        <dbReference type="ChEBI" id="CHEBI:64076"/>
        <dbReference type="ChEBI" id="CHEBI:456216"/>
        <dbReference type="EC" id="4.2.1.93"/>
    </reaction>
</comment>
<comment type="cofactor">
    <cofactor evidence="1">
        <name>Mg(2+)</name>
        <dbReference type="ChEBI" id="CHEBI:18420"/>
    </cofactor>
</comment>
<comment type="similarity">
    <text evidence="1">Belongs to the NnrD/CARKD family.</text>
</comment>
<dbReference type="EC" id="4.2.1.93" evidence="1"/>
<dbReference type="EMBL" id="CM000764">
    <property type="protein sequence ID" value="EES09669.1"/>
    <property type="molecule type" value="Genomic_DNA"/>
</dbReference>
<dbReference type="RefSeq" id="XP_002450681.1">
    <property type="nucleotide sequence ID" value="XM_002450636.1"/>
</dbReference>
<dbReference type="SMR" id="C5Y210"/>
<dbReference type="FunCoup" id="C5Y210">
    <property type="interactions" value="960"/>
</dbReference>
<dbReference type="STRING" id="4558.C5Y210"/>
<dbReference type="eggNOG" id="KOG3974">
    <property type="taxonomic scope" value="Eukaryota"/>
</dbReference>
<dbReference type="HOGENOM" id="CLU_030651_1_0_1"/>
<dbReference type="InParanoid" id="C5Y210"/>
<dbReference type="Proteomes" id="UP000000768">
    <property type="component" value="Chromosome 5"/>
</dbReference>
<dbReference type="ExpressionAtlas" id="C5Y210">
    <property type="expression patterns" value="baseline and differential"/>
</dbReference>
<dbReference type="GO" id="GO:0005524">
    <property type="term" value="F:ATP binding"/>
    <property type="evidence" value="ECO:0007669"/>
    <property type="project" value="UniProtKB-KW"/>
</dbReference>
<dbReference type="GO" id="GO:0047453">
    <property type="term" value="F:ATP-dependent NAD(P)H-hydrate dehydratase activity"/>
    <property type="evidence" value="ECO:0000318"/>
    <property type="project" value="GO_Central"/>
</dbReference>
<dbReference type="GO" id="GO:0110051">
    <property type="term" value="P:metabolite repair"/>
    <property type="evidence" value="ECO:0000318"/>
    <property type="project" value="GO_Central"/>
</dbReference>
<dbReference type="GO" id="GO:0046496">
    <property type="term" value="P:nicotinamide nucleotide metabolic process"/>
    <property type="evidence" value="ECO:0007669"/>
    <property type="project" value="UniProtKB-UniRule"/>
</dbReference>
<dbReference type="CDD" id="cd01171">
    <property type="entry name" value="YXKO-related"/>
    <property type="match status" value="1"/>
</dbReference>
<dbReference type="FunFam" id="3.40.1190.20:FF:000028">
    <property type="entry name" value="ATP-dependent (S)-NAD(P)H-hydrate dehydratase"/>
    <property type="match status" value="1"/>
</dbReference>
<dbReference type="Gene3D" id="3.40.1190.20">
    <property type="match status" value="1"/>
</dbReference>
<dbReference type="HAMAP" id="MF_01965">
    <property type="entry name" value="NADHX_dehydratase"/>
    <property type="match status" value="1"/>
</dbReference>
<dbReference type="InterPro" id="IPR000631">
    <property type="entry name" value="CARKD"/>
</dbReference>
<dbReference type="InterPro" id="IPR029056">
    <property type="entry name" value="Ribokinase-like"/>
</dbReference>
<dbReference type="NCBIfam" id="TIGR00196">
    <property type="entry name" value="yjeF_cterm"/>
    <property type="match status" value="1"/>
</dbReference>
<dbReference type="PANTHER" id="PTHR12592:SF0">
    <property type="entry name" value="ATP-DEPENDENT (S)-NAD(P)H-HYDRATE DEHYDRATASE"/>
    <property type="match status" value="1"/>
</dbReference>
<dbReference type="PANTHER" id="PTHR12592">
    <property type="entry name" value="ATP-DEPENDENT (S)-NAD(P)H-HYDRATE DEHYDRATASE FAMILY MEMBER"/>
    <property type="match status" value="1"/>
</dbReference>
<dbReference type="Pfam" id="PF01256">
    <property type="entry name" value="Carb_kinase"/>
    <property type="match status" value="1"/>
</dbReference>
<dbReference type="SUPFAM" id="SSF53613">
    <property type="entry name" value="Ribokinase-like"/>
    <property type="match status" value="1"/>
</dbReference>
<dbReference type="PROSITE" id="PS51383">
    <property type="entry name" value="YJEF_C_3"/>
    <property type="match status" value="1"/>
</dbReference>
<feature type="chain" id="PRO_0000416175" description="ATP-dependent (S)-NAD(P)H-hydrate dehydratase">
    <location>
        <begin position="1"/>
        <end position="381"/>
    </location>
</feature>
<feature type="domain" description="YjeF C-terminal" evidence="1">
    <location>
        <begin position="84"/>
        <end position="376"/>
    </location>
</feature>
<feature type="binding site" evidence="1">
    <location>
        <position position="197"/>
    </location>
    <ligand>
        <name>(6S)-NADPHX</name>
        <dbReference type="ChEBI" id="CHEBI:64076"/>
    </ligand>
</feature>
<feature type="binding site" evidence="1">
    <location>
        <begin position="250"/>
        <end position="256"/>
    </location>
    <ligand>
        <name>(6S)-NADPHX</name>
        <dbReference type="ChEBI" id="CHEBI:64076"/>
    </ligand>
</feature>
<feature type="binding site" evidence="1">
    <location>
        <begin position="290"/>
        <end position="294"/>
    </location>
    <ligand>
        <name>ATP</name>
        <dbReference type="ChEBI" id="CHEBI:30616"/>
    </ligand>
</feature>
<feature type="binding site" evidence="1">
    <location>
        <begin position="309"/>
        <end position="318"/>
    </location>
    <ligand>
        <name>ATP</name>
        <dbReference type="ChEBI" id="CHEBI:30616"/>
    </ligand>
</feature>
<feature type="binding site" evidence="1">
    <location>
        <position position="319"/>
    </location>
    <ligand>
        <name>(6S)-NADPHX</name>
        <dbReference type="ChEBI" id="CHEBI:64076"/>
    </ligand>
</feature>
<proteinExistence type="inferred from homology"/>
<sequence>MSRPTGACPHAWRHQQQPLRGRMWAASPAFRRQLVLLRSLLPSPPAPSSVAGFPPSCPSCSSFLRVRTNHAMAASAGTVYEADAEAVVRRITPPLDRARHKGQAGKIAVIGGCREYTGAPYFAAISALKVGADLSHVFCTKDAATVIKSYSPELIVHPILEESYSVRDDERASVSSKILTEVGKWMERFDCIVVGPGLGRDSFLLDCVSNIMRHARQANIPTVVDGDGLFLVTNNLSLVEGNPLAILTPNVYEYKRLVQKVLNCDVDEETASEQLITLCQKIGDVTIMQKGKADVISDGKTVTQVSTFGSPRRCGGQGDILSGSVAVFASWARHFVLTNEQPTEKRKAASHAFEKNKRSTVTSDIIEFLGKSLEDICPAEH</sequence>